<dbReference type="EMBL" id="AF010127">
    <property type="protein sequence ID" value="AAB64110.1"/>
    <property type="molecule type" value="mRNA"/>
</dbReference>
<dbReference type="EMBL" id="U85059">
    <property type="protein sequence ID" value="AAB82648.1"/>
    <property type="molecule type" value="mRNA"/>
</dbReference>
<dbReference type="EMBL" id="U97074">
    <property type="protein sequence ID" value="AAC51622.1"/>
    <property type="molecule type" value="mRNA"/>
</dbReference>
<dbReference type="EMBL" id="U97075">
    <property type="protein sequence ID" value="AAC51623.1"/>
    <property type="molecule type" value="mRNA"/>
</dbReference>
<dbReference type="EMBL" id="AF009616">
    <property type="protein sequence ID" value="AAB70909.1"/>
    <property type="molecule type" value="mRNA"/>
</dbReference>
<dbReference type="EMBL" id="AF009617">
    <property type="protein sequence ID" value="AAB70910.1"/>
    <property type="molecule type" value="mRNA"/>
</dbReference>
<dbReference type="EMBL" id="AF009618">
    <property type="protein sequence ID" value="AAB70911.1"/>
    <property type="molecule type" value="mRNA"/>
</dbReference>
<dbReference type="EMBL" id="AF009619">
    <property type="protein sequence ID" value="AAB70912.1"/>
    <property type="molecule type" value="mRNA"/>
</dbReference>
<dbReference type="EMBL" id="AF041458">
    <property type="protein sequence ID" value="AAB99790.1"/>
    <property type="molecule type" value="mRNA"/>
</dbReference>
<dbReference type="EMBL" id="AF041459">
    <property type="protein sequence ID" value="AAB99791.1"/>
    <property type="molecule type" value="mRNA"/>
</dbReference>
<dbReference type="EMBL" id="AF041462">
    <property type="protein sequence ID" value="AAB99794.1"/>
    <property type="molecule type" value="mRNA"/>
</dbReference>
<dbReference type="EMBL" id="AF041461">
    <property type="protein sequence ID" value="AAB99793.1"/>
    <property type="molecule type" value="mRNA"/>
</dbReference>
<dbReference type="EMBL" id="AF041460">
    <property type="protein sequence ID" value="AAB99792.1"/>
    <property type="molecule type" value="mRNA"/>
</dbReference>
<dbReference type="EMBL" id="Y14039">
    <property type="protein sequence ID" value="CAA74366.1"/>
    <property type="molecule type" value="mRNA"/>
</dbReference>
<dbReference type="EMBL" id="Y14040">
    <property type="protein sequence ID" value="CAA74367.1"/>
    <property type="molecule type" value="mRNA"/>
</dbReference>
<dbReference type="EMBL" id="AF005774">
    <property type="protein sequence ID" value="AAC15825.1"/>
    <property type="molecule type" value="mRNA"/>
</dbReference>
<dbReference type="EMBL" id="AF005775">
    <property type="protein sequence ID" value="AAC15826.1"/>
    <property type="molecule type" value="mRNA"/>
</dbReference>
<dbReference type="EMBL" id="AF015450">
    <property type="protein sequence ID" value="AAC16439.1"/>
    <property type="molecule type" value="mRNA"/>
</dbReference>
<dbReference type="EMBL" id="AF015451">
    <property type="protein sequence ID" value="AAC16440.1"/>
    <property type="molecule type" value="mRNA"/>
</dbReference>
<dbReference type="EMBL" id="AF015452">
    <property type="protein sequence ID" value="AAC16441.1"/>
    <property type="molecule type" value="mRNA"/>
</dbReference>
<dbReference type="EMBL" id="AB038972">
    <property type="protein sequence ID" value="BAB32551.1"/>
    <property type="molecule type" value="Genomic_DNA"/>
</dbReference>
<dbReference type="EMBL" id="AB038972">
    <property type="protein sequence ID" value="BAB32552.1"/>
    <property type="molecule type" value="Genomic_DNA"/>
</dbReference>
<dbReference type="EMBL" id="BT006751">
    <property type="protein sequence ID" value="AAP35397.1"/>
    <property type="molecule type" value="mRNA"/>
</dbReference>
<dbReference type="EMBL" id="AK289913">
    <property type="protein sequence ID" value="BAF82602.1"/>
    <property type="molecule type" value="mRNA"/>
</dbReference>
<dbReference type="EMBL" id="AK296036">
    <property type="protein sequence ID" value="BAG58802.1"/>
    <property type="molecule type" value="mRNA"/>
</dbReference>
<dbReference type="EMBL" id="AK315208">
    <property type="protein sequence ID" value="BAG37645.1"/>
    <property type="molecule type" value="mRNA"/>
</dbReference>
<dbReference type="EMBL" id="AK315924">
    <property type="protein sequence ID" value="BAH14295.1"/>
    <property type="molecule type" value="mRNA"/>
</dbReference>
<dbReference type="EMBL" id="AC007283">
    <property type="protein sequence ID" value="AAY24290.1"/>
    <property type="molecule type" value="Genomic_DNA"/>
</dbReference>
<dbReference type="EMBL" id="CH471063">
    <property type="protein sequence ID" value="EAW70237.1"/>
    <property type="molecule type" value="Genomic_DNA"/>
</dbReference>
<dbReference type="EMBL" id="CH471063">
    <property type="protein sequence ID" value="EAW70244.1"/>
    <property type="molecule type" value="Genomic_DNA"/>
</dbReference>
<dbReference type="EMBL" id="BC001602">
    <property type="protein sequence ID" value="AAH01602.1"/>
    <property type="molecule type" value="mRNA"/>
</dbReference>
<dbReference type="CCDS" id="CCDS2337.1">
    <molecule id="O15519-1"/>
</dbReference>
<dbReference type="CCDS" id="CCDS46487.1">
    <molecule id="O15519-2"/>
</dbReference>
<dbReference type="CCDS" id="CCDS56157.1">
    <molecule id="O15519-8"/>
</dbReference>
<dbReference type="CCDS" id="CCDS56158.1">
    <molecule id="O15519-15"/>
</dbReference>
<dbReference type="CCDS" id="CCDS59436.1">
    <molecule id="O15519-3"/>
</dbReference>
<dbReference type="CCDS" id="CCDS77505.1">
    <molecule id="O15519-11"/>
</dbReference>
<dbReference type="RefSeq" id="NP_001120655.1">
    <molecule id="O15519-1"/>
    <property type="nucleotide sequence ID" value="NM_001127183.4"/>
</dbReference>
<dbReference type="RefSeq" id="NP_001120656.1">
    <molecule id="O15519-2"/>
    <property type="nucleotide sequence ID" value="NM_001127184.4"/>
</dbReference>
<dbReference type="RefSeq" id="NP_001189444.1">
    <molecule id="O15519-4"/>
    <property type="nucleotide sequence ID" value="NM_001202515.1"/>
</dbReference>
<dbReference type="RefSeq" id="NP_001189445.1">
    <molecule id="O15519-8"/>
    <property type="nucleotide sequence ID" value="NM_001202516.3"/>
</dbReference>
<dbReference type="RefSeq" id="NP_001189446.1">
    <molecule id="O15519-15"/>
    <property type="nucleotide sequence ID" value="NM_001202517.3"/>
</dbReference>
<dbReference type="RefSeq" id="NP_001189447.1">
    <molecule id="O15519-3"/>
    <property type="nucleotide sequence ID" value="NM_001202518.2"/>
</dbReference>
<dbReference type="RefSeq" id="NP_001189448.1">
    <molecule id="O15519-3"/>
    <property type="nucleotide sequence ID" value="NM_001202519.3"/>
</dbReference>
<dbReference type="RefSeq" id="NP_001294971.1">
    <molecule id="O15519-11"/>
    <property type="nucleotide sequence ID" value="NM_001308042.3"/>
</dbReference>
<dbReference type="RefSeq" id="NP_001338519.1">
    <molecule id="O15519-11"/>
    <property type="nucleotide sequence ID" value="NM_001351590.2"/>
</dbReference>
<dbReference type="RefSeq" id="NP_001338520.1">
    <molecule id="O15519-2"/>
    <property type="nucleotide sequence ID" value="NM_001351591.2"/>
</dbReference>
<dbReference type="RefSeq" id="NP_001338521.1">
    <molecule id="O15519-2"/>
    <property type="nucleotide sequence ID" value="NM_001351592.2"/>
</dbReference>
<dbReference type="RefSeq" id="NP_001338522.1">
    <molecule id="O15519-15"/>
    <property type="nucleotide sequence ID" value="NM_001351593.2"/>
</dbReference>
<dbReference type="RefSeq" id="NP_001338523.1">
    <molecule id="O15519-15"/>
    <property type="nucleotide sequence ID" value="NM_001351594.2"/>
</dbReference>
<dbReference type="RefSeq" id="NP_003870.4">
    <molecule id="O15519-1"/>
    <property type="nucleotide sequence ID" value="NM_003879.5"/>
</dbReference>
<dbReference type="RefSeq" id="XP_016860679.1">
    <property type="nucleotide sequence ID" value="XM_017005190.1"/>
</dbReference>
<dbReference type="RefSeq" id="XP_016860680.1">
    <property type="nucleotide sequence ID" value="XM_017005191.1"/>
</dbReference>
<dbReference type="RefSeq" id="XP_016860681.1">
    <property type="nucleotide sequence ID" value="XM_017005192.1"/>
</dbReference>
<dbReference type="RefSeq" id="XP_016860682.1">
    <property type="nucleotide sequence ID" value="XM_017005193.1"/>
</dbReference>
<dbReference type="RefSeq" id="XP_016860683.1">
    <property type="nucleotide sequence ID" value="XM_017005194.1"/>
</dbReference>
<dbReference type="RefSeq" id="XP_016860684.1">
    <property type="nucleotide sequence ID" value="XM_017005195.1"/>
</dbReference>
<dbReference type="RefSeq" id="XP_016860685.1">
    <property type="nucleotide sequence ID" value="XM_017005196.1"/>
</dbReference>
<dbReference type="RefSeq" id="XP_016860686.1">
    <property type="nucleotide sequence ID" value="XM_017005197.1"/>
</dbReference>
<dbReference type="RefSeq" id="XP_016860687.1">
    <property type="nucleotide sequence ID" value="XM_017005198.1"/>
</dbReference>
<dbReference type="RefSeq" id="XP_047302141.1">
    <molecule id="O15519-1"/>
    <property type="nucleotide sequence ID" value="XM_047446185.1"/>
</dbReference>
<dbReference type="RefSeq" id="XP_047302147.1">
    <molecule id="O15519-15"/>
    <property type="nucleotide sequence ID" value="XM_047446191.1"/>
</dbReference>
<dbReference type="RefSeq" id="XP_047302153.1">
    <molecule id="O15519-2"/>
    <property type="nucleotide sequence ID" value="XM_047446197.1"/>
</dbReference>
<dbReference type="RefSeq" id="XP_054200346.1">
    <molecule id="O15519-1"/>
    <property type="nucleotide sequence ID" value="XM_054344371.1"/>
</dbReference>
<dbReference type="RefSeq" id="XP_054200347.1">
    <molecule id="O15519-15"/>
    <property type="nucleotide sequence ID" value="XM_054344372.1"/>
</dbReference>
<dbReference type="RefSeq" id="XP_054200350.1">
    <molecule id="O15519-2"/>
    <property type="nucleotide sequence ID" value="XM_054344375.1"/>
</dbReference>
<dbReference type="PDB" id="2N5R">
    <property type="method" value="NMR"/>
    <property type="chains" value="A=62-73"/>
</dbReference>
<dbReference type="PDB" id="3H11">
    <property type="method" value="X-ray"/>
    <property type="resolution" value="1.90 A"/>
    <property type="chains" value="A=209-480"/>
</dbReference>
<dbReference type="PDB" id="3H13">
    <property type="method" value="X-ray"/>
    <property type="resolution" value="2.20 A"/>
    <property type="chains" value="A=209-480"/>
</dbReference>
<dbReference type="PDB" id="6M6O">
    <property type="method" value="NMR"/>
    <property type="chains" value="A=2-173"/>
</dbReference>
<dbReference type="PDB" id="7DEE">
    <property type="method" value="NMR"/>
    <property type="chains" value="A=2-173"/>
</dbReference>
<dbReference type="PDB" id="7LXC">
    <property type="method" value="NMR"/>
    <property type="chains" value="A=1-13, A=37-94"/>
</dbReference>
<dbReference type="PDB" id="8YBX">
    <property type="method" value="EM"/>
    <property type="resolution" value="3.68 A"/>
    <property type="chains" value="H/I/J/K=1-181"/>
</dbReference>
<dbReference type="PDB" id="8YD7">
    <property type="method" value="X-ray"/>
    <property type="resolution" value="3.32 A"/>
    <property type="chains" value="G/H/I/K=1-181"/>
</dbReference>
<dbReference type="PDB" id="8YD8">
    <property type="method" value="X-ray"/>
    <property type="resolution" value="3.11 A"/>
    <property type="chains" value="H/I/J/K=1-181"/>
</dbReference>
<dbReference type="PDB" id="8YM4">
    <property type="method" value="X-ray"/>
    <property type="resolution" value="2.34 A"/>
    <property type="chains" value="F/G/H/I/J/K=1-181"/>
</dbReference>
<dbReference type="PDB" id="8YM5">
    <property type="method" value="X-ray"/>
    <property type="resolution" value="2.09 A"/>
    <property type="chains" value="F/G/H/I/J/K=1-181"/>
</dbReference>
<dbReference type="PDB" id="8YM6">
    <property type="method" value="X-ray"/>
    <property type="resolution" value="3.30 A"/>
    <property type="chains" value="F/G/H/I/J/K/M/N/O=1-181"/>
</dbReference>
<dbReference type="PDB" id="8YNI">
    <property type="method" value="EM"/>
    <property type="resolution" value="3.66 A"/>
    <property type="chains" value="G/H/I/J/K=1-181"/>
</dbReference>
<dbReference type="PDB" id="8YNK">
    <property type="method" value="EM"/>
    <property type="resolution" value="3.62 A"/>
    <property type="chains" value="G/H/I/J/K=1-181"/>
</dbReference>
<dbReference type="PDB" id="8YNL">
    <property type="method" value="EM"/>
    <property type="resolution" value="3.55 A"/>
    <property type="chains" value="F/G/H/I/J/K=1-181"/>
</dbReference>
<dbReference type="PDB" id="8YNM">
    <property type="method" value="EM"/>
    <property type="resolution" value="3.49 A"/>
    <property type="chains" value="F/G/H/I/J/K/N/O=1-181"/>
</dbReference>
<dbReference type="PDB" id="8YNN">
    <property type="method" value="EM"/>
    <property type="resolution" value="3.97 A"/>
    <property type="chains" value="H/I/J/K=1-181"/>
</dbReference>
<dbReference type="PDBsum" id="2N5R"/>
<dbReference type="PDBsum" id="3H11"/>
<dbReference type="PDBsum" id="3H13"/>
<dbReference type="PDBsum" id="6M6O"/>
<dbReference type="PDBsum" id="7DEE"/>
<dbReference type="PDBsum" id="7LXC"/>
<dbReference type="PDBsum" id="8YBX"/>
<dbReference type="PDBsum" id="8YD7"/>
<dbReference type="PDBsum" id="8YD8"/>
<dbReference type="PDBsum" id="8YM4"/>
<dbReference type="PDBsum" id="8YM5"/>
<dbReference type="PDBsum" id="8YM6"/>
<dbReference type="PDBsum" id="8YNI"/>
<dbReference type="PDBsum" id="8YNK"/>
<dbReference type="PDBsum" id="8YNL"/>
<dbReference type="PDBsum" id="8YNM"/>
<dbReference type="PDBsum" id="8YNN"/>
<dbReference type="EMDB" id="EMD-39126"/>
<dbReference type="EMDB" id="EMD-39424"/>
<dbReference type="EMDB" id="EMD-39425"/>
<dbReference type="EMDB" id="EMD-39426"/>
<dbReference type="EMDB" id="EMD-39427"/>
<dbReference type="EMDB" id="EMD-39428"/>
<dbReference type="SMR" id="O15519"/>
<dbReference type="BioGRID" id="114364">
    <property type="interactions" value="69"/>
</dbReference>
<dbReference type="CORUM" id="O15519"/>
<dbReference type="DIP" id="DIP-27629N"/>
<dbReference type="FunCoup" id="O15519">
    <property type="interactions" value="1010"/>
</dbReference>
<dbReference type="IntAct" id="O15519">
    <property type="interactions" value="31"/>
</dbReference>
<dbReference type="MINT" id="O15519"/>
<dbReference type="STRING" id="9606.ENSP00000312455"/>
<dbReference type="ChEMBL" id="CHEMBL1955713"/>
<dbReference type="MEROPS" id="C14.971"/>
<dbReference type="iPTMnet" id="O15519"/>
<dbReference type="PhosphoSitePlus" id="O15519"/>
<dbReference type="BioMuta" id="CFLAR"/>
<dbReference type="jPOST" id="O15519"/>
<dbReference type="MassIVE" id="O15519"/>
<dbReference type="PaxDb" id="9606-ENSP00000312455"/>
<dbReference type="PeptideAtlas" id="O15519"/>
<dbReference type="ProteomicsDB" id="4369"/>
<dbReference type="ProteomicsDB" id="48707">
    <molecule id="O15519-1"/>
</dbReference>
<dbReference type="ProteomicsDB" id="48708">
    <molecule id="O15519-10"/>
</dbReference>
<dbReference type="ProteomicsDB" id="48709">
    <molecule id="O15519-11"/>
</dbReference>
<dbReference type="ProteomicsDB" id="48710">
    <molecule id="O15519-12"/>
</dbReference>
<dbReference type="ProteomicsDB" id="48711">
    <molecule id="O15519-13"/>
</dbReference>
<dbReference type="ProteomicsDB" id="48712">
    <molecule id="O15519-14"/>
</dbReference>
<dbReference type="ProteomicsDB" id="48713">
    <molecule id="O15519-2"/>
</dbReference>
<dbReference type="ProteomicsDB" id="48714">
    <molecule id="O15519-3"/>
</dbReference>
<dbReference type="ProteomicsDB" id="48716">
    <molecule id="O15519-5"/>
</dbReference>
<dbReference type="ProteomicsDB" id="48717">
    <molecule id="O15519-6"/>
</dbReference>
<dbReference type="ProteomicsDB" id="48718">
    <molecule id="O15519-7"/>
</dbReference>
<dbReference type="ProteomicsDB" id="48719">
    <molecule id="O15519-8"/>
</dbReference>
<dbReference type="ProteomicsDB" id="48720">
    <molecule id="O15519-9"/>
</dbReference>
<dbReference type="Antibodypedia" id="19934">
    <property type="antibodies" value="954 antibodies from 44 providers"/>
</dbReference>
<dbReference type="DNASU" id="8837"/>
<dbReference type="Ensembl" id="ENST00000309955.8">
    <molecule id="O15519-1"/>
    <property type="protein sequence ID" value="ENSP00000312455.2"/>
    <property type="gene ID" value="ENSG00000003402.21"/>
</dbReference>
<dbReference type="Ensembl" id="ENST00000341222.10">
    <molecule id="O15519-2"/>
    <property type="protein sequence ID" value="ENSP00000339335.6"/>
    <property type="gene ID" value="ENSG00000003402.21"/>
</dbReference>
<dbReference type="Ensembl" id="ENST00000341582.10">
    <molecule id="O15519-8"/>
    <property type="protein sequence ID" value="ENSP00000345807.6"/>
    <property type="gene ID" value="ENSG00000003402.21"/>
</dbReference>
<dbReference type="Ensembl" id="ENST00000342795.9">
    <molecule id="O15519-12"/>
    <property type="protein sequence ID" value="ENSP00000342809.5"/>
    <property type="gene ID" value="ENSG00000003402.21"/>
</dbReference>
<dbReference type="Ensembl" id="ENST00000423241.6">
    <molecule id="O15519-1"/>
    <property type="protein sequence ID" value="ENSP00000399420.2"/>
    <property type="gene ID" value="ENSG00000003402.21"/>
</dbReference>
<dbReference type="Ensembl" id="ENST00000440180.5">
    <molecule id="O15519-2"/>
    <property type="protein sequence ID" value="ENSP00000406775.1"/>
    <property type="gene ID" value="ENSG00000003402.21"/>
</dbReference>
<dbReference type="Ensembl" id="ENST00000443227.5">
    <molecule id="O15519-15"/>
    <property type="protein sequence ID" value="ENSP00000413270.1"/>
    <property type="gene ID" value="ENSG00000003402.21"/>
</dbReference>
<dbReference type="Ensembl" id="ENST00000457277.5">
    <molecule id="O15519-11"/>
    <property type="protein sequence ID" value="ENSP00000411535.1"/>
    <property type="gene ID" value="ENSG00000003402.21"/>
</dbReference>
<dbReference type="Ensembl" id="ENST00000479953.6">
    <molecule id="O15519-3"/>
    <property type="protein sequence ID" value="ENSP00000471805.1"/>
    <property type="gene ID" value="ENSG00000003402.21"/>
</dbReference>
<dbReference type="GeneID" id="8837"/>
<dbReference type="KEGG" id="hsa:8837"/>
<dbReference type="MANE-Select" id="ENST00000309955.8">
    <property type="protein sequence ID" value="ENSP00000312455.2"/>
    <property type="RefSeq nucleotide sequence ID" value="NM_003879.7"/>
    <property type="RefSeq protein sequence ID" value="NP_003870.4"/>
</dbReference>
<dbReference type="UCSC" id="uc002uwz.4">
    <molecule id="O15519-1"/>
    <property type="organism name" value="human"/>
</dbReference>
<dbReference type="AGR" id="HGNC:1876"/>
<dbReference type="CTD" id="8837"/>
<dbReference type="DisGeNET" id="8837"/>
<dbReference type="GeneCards" id="CFLAR"/>
<dbReference type="HGNC" id="HGNC:1876">
    <property type="gene designation" value="CFLAR"/>
</dbReference>
<dbReference type="HPA" id="ENSG00000003402">
    <property type="expression patterns" value="Low tissue specificity"/>
</dbReference>
<dbReference type="MIM" id="603599">
    <property type="type" value="gene"/>
</dbReference>
<dbReference type="neXtProt" id="NX_O15519"/>
<dbReference type="OpenTargets" id="ENSG00000003402"/>
<dbReference type="PharmGKB" id="PA26425"/>
<dbReference type="VEuPathDB" id="HostDB:ENSG00000003402"/>
<dbReference type="eggNOG" id="KOG3573">
    <property type="taxonomic scope" value="Eukaryota"/>
</dbReference>
<dbReference type="GeneTree" id="ENSGT00530000064199"/>
<dbReference type="HOGENOM" id="CLU_1030405_0_0_1"/>
<dbReference type="InParanoid" id="O15519"/>
<dbReference type="OMA" id="MPQHRDY"/>
<dbReference type="OrthoDB" id="8816507at2759"/>
<dbReference type="PAN-GO" id="O15519">
    <property type="GO annotations" value="6 GO annotations based on evolutionary models"/>
</dbReference>
<dbReference type="PhylomeDB" id="O15519"/>
<dbReference type="TreeFam" id="TF352765"/>
<dbReference type="PathwayCommons" id="O15519"/>
<dbReference type="Reactome" id="R-HSA-3371378">
    <molecule id="O15519-1"/>
    <property type="pathway name" value="Regulation by c-FLIP"/>
</dbReference>
<dbReference type="Reactome" id="R-HSA-5213460">
    <property type="pathway name" value="RIPK1-mediated regulated necrosis"/>
</dbReference>
<dbReference type="Reactome" id="R-HSA-5218900">
    <property type="pathway name" value="CASP8 activity is inhibited"/>
</dbReference>
<dbReference type="Reactome" id="R-HSA-5357905">
    <molecule id="O15519-1"/>
    <property type="pathway name" value="Regulation of TNFR1 signaling"/>
</dbReference>
<dbReference type="Reactome" id="R-HSA-69416">
    <molecule id="O15519-2"/>
    <property type="pathway name" value="Dimerization of procaspase-8"/>
</dbReference>
<dbReference type="Reactome" id="R-HSA-75158">
    <property type="pathway name" value="TRAIL signaling"/>
</dbReference>
<dbReference type="SignaLink" id="O15519"/>
<dbReference type="SIGNOR" id="O15519"/>
<dbReference type="BioGRID-ORCS" id="8837">
    <property type="hits" value="343 hits in 1156 CRISPR screens"/>
</dbReference>
<dbReference type="ChiTaRS" id="CFLAR">
    <property type="organism name" value="human"/>
</dbReference>
<dbReference type="EvolutionaryTrace" id="O15519"/>
<dbReference type="GeneWiki" id="CFLAR"/>
<dbReference type="GenomeRNAi" id="8837"/>
<dbReference type="Pharos" id="O15519">
    <property type="development level" value="Tbio"/>
</dbReference>
<dbReference type="PRO" id="PR:O15519"/>
<dbReference type="Proteomes" id="UP000005640">
    <property type="component" value="Chromosome 2"/>
</dbReference>
<dbReference type="RNAct" id="O15519">
    <property type="molecule type" value="protein"/>
</dbReference>
<dbReference type="Bgee" id="ENSG00000003402">
    <property type="expression patterns" value="Expressed in right lung and 211 other cell types or tissues"/>
</dbReference>
<dbReference type="ExpressionAtlas" id="O15519">
    <property type="expression patterns" value="baseline and differential"/>
</dbReference>
<dbReference type="GO" id="GO:0031265">
    <property type="term" value="C:CD95 death-inducing signaling complex"/>
    <property type="evidence" value="ECO:0000318"/>
    <property type="project" value="GO_Central"/>
</dbReference>
<dbReference type="GO" id="GO:0005737">
    <property type="term" value="C:cytoplasm"/>
    <property type="evidence" value="ECO:0000314"/>
    <property type="project" value="UniProtKB"/>
</dbReference>
<dbReference type="GO" id="GO:0005829">
    <property type="term" value="C:cytosol"/>
    <property type="evidence" value="ECO:0000304"/>
    <property type="project" value="Reactome"/>
</dbReference>
<dbReference type="GO" id="GO:0031264">
    <property type="term" value="C:death-inducing signaling complex"/>
    <property type="evidence" value="ECO:0000314"/>
    <property type="project" value="UniProtKB"/>
</dbReference>
<dbReference type="GO" id="GO:0097342">
    <property type="term" value="C:ripoptosome"/>
    <property type="evidence" value="ECO:0000314"/>
    <property type="project" value="UniProtKB"/>
</dbReference>
<dbReference type="GO" id="GO:0004197">
    <property type="term" value="F:cysteine-type endopeptidase activity"/>
    <property type="evidence" value="ECO:0000318"/>
    <property type="project" value="GO_Central"/>
</dbReference>
<dbReference type="GO" id="GO:0005123">
    <property type="term" value="F:death receptor binding"/>
    <property type="evidence" value="ECO:0007669"/>
    <property type="project" value="Ensembl"/>
</dbReference>
<dbReference type="GO" id="GO:0008047">
    <property type="term" value="F:enzyme activator activity"/>
    <property type="evidence" value="ECO:0000314"/>
    <property type="project" value="UniProtKB"/>
</dbReference>
<dbReference type="GO" id="GO:0002020">
    <property type="term" value="F:protease binding"/>
    <property type="evidence" value="ECO:0000353"/>
    <property type="project" value="UniProtKB"/>
</dbReference>
<dbReference type="GO" id="GO:0044877">
    <property type="term" value="F:protein-containing complex binding"/>
    <property type="evidence" value="ECO:0007669"/>
    <property type="project" value="Ensembl"/>
</dbReference>
<dbReference type="GO" id="GO:0006915">
    <property type="term" value="P:apoptotic process"/>
    <property type="evidence" value="ECO:0000315"/>
    <property type="project" value="UniProtKB"/>
</dbReference>
<dbReference type="GO" id="GO:0071549">
    <property type="term" value="P:cellular response to dexamethasone stimulus"/>
    <property type="evidence" value="ECO:0007669"/>
    <property type="project" value="Ensembl"/>
</dbReference>
<dbReference type="GO" id="GO:0071364">
    <property type="term" value="P:cellular response to epidermal growth factor stimulus"/>
    <property type="evidence" value="ECO:0007669"/>
    <property type="project" value="Ensembl"/>
</dbReference>
<dbReference type="GO" id="GO:0071392">
    <property type="term" value="P:cellular response to estradiol stimulus"/>
    <property type="evidence" value="ECO:0007669"/>
    <property type="project" value="Ensembl"/>
</dbReference>
<dbReference type="GO" id="GO:0071456">
    <property type="term" value="P:cellular response to hypoxia"/>
    <property type="evidence" value="ECO:0007669"/>
    <property type="project" value="Ensembl"/>
</dbReference>
<dbReference type="GO" id="GO:0032869">
    <property type="term" value="P:cellular response to insulin stimulus"/>
    <property type="evidence" value="ECO:0007669"/>
    <property type="project" value="Ensembl"/>
</dbReference>
<dbReference type="GO" id="GO:0071732">
    <property type="term" value="P:cellular response to nitric oxide"/>
    <property type="evidence" value="ECO:0007669"/>
    <property type="project" value="Ensembl"/>
</dbReference>
<dbReference type="GO" id="GO:0008625">
    <property type="term" value="P:extrinsic apoptotic signaling pathway via death domain receptors"/>
    <property type="evidence" value="ECO:0000318"/>
    <property type="project" value="GO_Central"/>
</dbReference>
<dbReference type="GO" id="GO:0030225">
    <property type="term" value="P:macrophage differentiation"/>
    <property type="evidence" value="ECO:0000318"/>
    <property type="project" value="GO_Central"/>
</dbReference>
<dbReference type="GO" id="GO:0043066">
    <property type="term" value="P:negative regulation of apoptotic process"/>
    <property type="evidence" value="ECO:0000304"/>
    <property type="project" value="ProtInc"/>
</dbReference>
<dbReference type="GO" id="GO:0010667">
    <property type="term" value="P:negative regulation of cardiac muscle cell apoptotic process"/>
    <property type="evidence" value="ECO:0007669"/>
    <property type="project" value="Ensembl"/>
</dbReference>
<dbReference type="GO" id="GO:1903845">
    <property type="term" value="P:negative regulation of cellular response to transforming growth factor beta stimulus"/>
    <property type="evidence" value="ECO:0007669"/>
    <property type="project" value="Ensembl"/>
</dbReference>
<dbReference type="GO" id="GO:2001237">
    <property type="term" value="P:negative regulation of extrinsic apoptotic signaling pathway"/>
    <property type="evidence" value="ECO:0000314"/>
    <property type="project" value="UniProtKB"/>
</dbReference>
<dbReference type="GO" id="GO:1902042">
    <property type="term" value="P:negative regulation of extrinsic apoptotic signaling pathway via death domain receptors"/>
    <property type="evidence" value="ECO:0000314"/>
    <property type="project" value="MGI"/>
</dbReference>
<dbReference type="GO" id="GO:1903944">
    <property type="term" value="P:negative regulation of hepatocyte apoptotic process"/>
    <property type="evidence" value="ECO:0007669"/>
    <property type="project" value="Ensembl"/>
</dbReference>
<dbReference type="GO" id="GO:1901740">
    <property type="term" value="P:negative regulation of myoblast fusion"/>
    <property type="evidence" value="ECO:0000250"/>
    <property type="project" value="BHF-UCL"/>
</dbReference>
<dbReference type="GO" id="GO:1903427">
    <property type="term" value="P:negative regulation of reactive oxygen species biosynthetic process"/>
    <property type="evidence" value="ECO:0007669"/>
    <property type="project" value="Ensembl"/>
</dbReference>
<dbReference type="GO" id="GO:0043123">
    <property type="term" value="P:positive regulation of canonical NF-kappaB signal transduction"/>
    <property type="evidence" value="ECO:0000270"/>
    <property type="project" value="UniProtKB"/>
</dbReference>
<dbReference type="GO" id="GO:0070374">
    <property type="term" value="P:positive regulation of ERK1 and ERK2 cascade"/>
    <property type="evidence" value="ECO:0007669"/>
    <property type="project" value="Ensembl"/>
</dbReference>
<dbReference type="GO" id="GO:1903055">
    <property type="term" value="P:positive regulation of extracellular matrix organization"/>
    <property type="evidence" value="ECO:0007669"/>
    <property type="project" value="Ensembl"/>
</dbReference>
<dbReference type="GO" id="GO:0072126">
    <property type="term" value="P:positive regulation of glomerular mesangial cell proliferation"/>
    <property type="evidence" value="ECO:0007669"/>
    <property type="project" value="Ensembl"/>
</dbReference>
<dbReference type="GO" id="GO:2000347">
    <property type="term" value="P:positive regulation of hepatocyte proliferation"/>
    <property type="evidence" value="ECO:0007669"/>
    <property type="project" value="Ensembl"/>
</dbReference>
<dbReference type="GO" id="GO:0043525">
    <property type="term" value="P:positive regulation of neuron apoptotic process"/>
    <property type="evidence" value="ECO:0000318"/>
    <property type="project" value="GO_Central"/>
</dbReference>
<dbReference type="GO" id="GO:0010976">
    <property type="term" value="P:positive regulation of neuron projection development"/>
    <property type="evidence" value="ECO:0007669"/>
    <property type="project" value="Ensembl"/>
</dbReference>
<dbReference type="GO" id="GO:0006508">
    <property type="term" value="P:proteolysis"/>
    <property type="evidence" value="ECO:0007669"/>
    <property type="project" value="InterPro"/>
</dbReference>
<dbReference type="GO" id="GO:0060544">
    <property type="term" value="P:regulation of necroptotic process"/>
    <property type="evidence" value="ECO:0000314"/>
    <property type="project" value="UniProtKB"/>
</dbReference>
<dbReference type="GO" id="GO:0014842">
    <property type="term" value="P:regulation of skeletal muscle satellite cell proliferation"/>
    <property type="evidence" value="ECO:0000250"/>
    <property type="project" value="BHF-UCL"/>
</dbReference>
<dbReference type="GO" id="GO:0033574">
    <property type="term" value="P:response to testosterone"/>
    <property type="evidence" value="ECO:0007669"/>
    <property type="project" value="Ensembl"/>
</dbReference>
<dbReference type="GO" id="GO:0014732">
    <property type="term" value="P:skeletal muscle atrophy"/>
    <property type="evidence" value="ECO:0000250"/>
    <property type="project" value="BHF-UCL"/>
</dbReference>
<dbReference type="GO" id="GO:0007519">
    <property type="term" value="P:skeletal muscle tissue development"/>
    <property type="evidence" value="ECO:0000250"/>
    <property type="project" value="BHF-UCL"/>
</dbReference>
<dbReference type="GO" id="GO:0043403">
    <property type="term" value="P:skeletal muscle tissue regeneration"/>
    <property type="evidence" value="ECO:0000250"/>
    <property type="project" value="BHF-UCL"/>
</dbReference>
<dbReference type="GO" id="GO:0014866">
    <property type="term" value="P:skeletal myofibril assembly"/>
    <property type="evidence" value="ECO:0000250"/>
    <property type="project" value="BHF-UCL"/>
</dbReference>
<dbReference type="CDD" id="cd00032">
    <property type="entry name" value="CASc"/>
    <property type="match status" value="1"/>
</dbReference>
<dbReference type="CDD" id="cd08337">
    <property type="entry name" value="DED_c-FLIP_r1"/>
    <property type="match status" value="1"/>
</dbReference>
<dbReference type="CDD" id="cd08340">
    <property type="entry name" value="DED_c-FLIP_r2"/>
    <property type="match status" value="1"/>
</dbReference>
<dbReference type="FunFam" id="1.10.533.10:FF:000020">
    <property type="entry name" value="CASP8 and FADD like apoptosis regulator"/>
    <property type="match status" value="1"/>
</dbReference>
<dbReference type="FunFam" id="1.10.533.10:FF:000016">
    <property type="entry name" value="CASP8 and FADD-like apoptosis regulator"/>
    <property type="match status" value="1"/>
</dbReference>
<dbReference type="Gene3D" id="3.40.50.1460">
    <property type="match status" value="1"/>
</dbReference>
<dbReference type="Gene3D" id="1.10.533.10">
    <property type="entry name" value="Death Domain, Fas"/>
    <property type="match status" value="2"/>
</dbReference>
<dbReference type="InterPro" id="IPR029030">
    <property type="entry name" value="Caspase-like_dom_sf"/>
</dbReference>
<dbReference type="InterPro" id="IPR011029">
    <property type="entry name" value="DEATH-like_dom_sf"/>
</dbReference>
<dbReference type="InterPro" id="IPR001875">
    <property type="entry name" value="DED_dom"/>
</dbReference>
<dbReference type="InterPro" id="IPR011600">
    <property type="entry name" value="Pept_C14_caspase"/>
</dbReference>
<dbReference type="InterPro" id="IPR001309">
    <property type="entry name" value="Pept_C14_p20"/>
</dbReference>
<dbReference type="InterPro" id="IPR015917">
    <property type="entry name" value="Pept_C14A"/>
</dbReference>
<dbReference type="PANTHER" id="PTHR48169:SF3">
    <property type="entry name" value="CASP8 AND FADD LIKE APOPTOSIS REGULATOR"/>
    <property type="match status" value="1"/>
</dbReference>
<dbReference type="PANTHER" id="PTHR48169">
    <property type="entry name" value="DED DOMAIN-CONTAINING PROTEIN"/>
    <property type="match status" value="1"/>
</dbReference>
<dbReference type="Pfam" id="PF01335">
    <property type="entry name" value="DED"/>
    <property type="match status" value="2"/>
</dbReference>
<dbReference type="Pfam" id="PF00656">
    <property type="entry name" value="Peptidase_C14"/>
    <property type="match status" value="1"/>
</dbReference>
<dbReference type="SMART" id="SM00115">
    <property type="entry name" value="CASc"/>
    <property type="match status" value="1"/>
</dbReference>
<dbReference type="SMART" id="SM00031">
    <property type="entry name" value="DED"/>
    <property type="match status" value="2"/>
</dbReference>
<dbReference type="SUPFAM" id="SSF52129">
    <property type="entry name" value="Caspase-like"/>
    <property type="match status" value="1"/>
</dbReference>
<dbReference type="SUPFAM" id="SSF47986">
    <property type="entry name" value="DEATH domain"/>
    <property type="match status" value="2"/>
</dbReference>
<dbReference type="PROSITE" id="PS50208">
    <property type="entry name" value="CASPASE_P20"/>
    <property type="match status" value="1"/>
</dbReference>
<dbReference type="PROSITE" id="PS50168">
    <property type="entry name" value="DED"/>
    <property type="match status" value="2"/>
</dbReference>
<organism>
    <name type="scientific">Homo sapiens</name>
    <name type="common">Human</name>
    <dbReference type="NCBI Taxonomy" id="9606"/>
    <lineage>
        <taxon>Eukaryota</taxon>
        <taxon>Metazoa</taxon>
        <taxon>Chordata</taxon>
        <taxon>Craniata</taxon>
        <taxon>Vertebrata</taxon>
        <taxon>Euteleostomi</taxon>
        <taxon>Mammalia</taxon>
        <taxon>Eutheria</taxon>
        <taxon>Euarchontoglires</taxon>
        <taxon>Primates</taxon>
        <taxon>Haplorrhini</taxon>
        <taxon>Catarrhini</taxon>
        <taxon>Hominidae</taxon>
        <taxon>Homo</taxon>
    </lineage>
</organism>
<reference key="1">
    <citation type="journal article" date="1997" name="Immunity">
        <title>Casper is a FADD- and caspase-related inducer of apoptosis.</title>
        <authorList>
            <person name="Shu H.-B."/>
            <person name="Halpin D.R."/>
            <person name="Goeddel D.V."/>
        </authorList>
    </citation>
    <scope>NUCLEOTIDE SEQUENCE [MRNA] (ISOFORMS 1; 13 AND 14)</scope>
    <scope>MUTAGENESIS OF TYR-360</scope>
    <scope>INTERACTION WITH FADD; CASP8; CASP3; TRAF1 AND TRAF2</scope>
    <source>
        <tissue>Embryonic kidney</tissue>
        <tissue>Umbilical vein endothelial cell</tissue>
    </source>
</reference>
<reference key="2">
    <citation type="journal article" date="1997" name="Proc. Natl. Acad. Sci. U.S.A.">
        <title>MRIT, a novel death-effector domain-containing protein, interacts with caspases and BclXL and initiates cell death.</title>
        <authorList>
            <person name="Han D.K.M."/>
            <person name="Chaudhary P.M."/>
            <person name="Wright M.E."/>
            <person name="Friedman C."/>
            <person name="Trask B.J."/>
            <person name="Riedel R.T."/>
            <person name="Baskin D.G."/>
            <person name="Schwartz S.M."/>
            <person name="Hood L."/>
        </authorList>
    </citation>
    <scope>NUCLEOTIDE SEQUENCE [MRNA] (ISOFORMS 1; 2 AND 3)</scope>
    <scope>INTERACTION WITH FADD; CASP8; CASP3 AND BCL-X(L)</scope>
</reference>
<reference key="3">
    <citation type="journal article" date="1997" name="Nature">
        <title>Inhibition of death receptor signals by cellular FLIP.</title>
        <authorList>
            <person name="Irmler M."/>
            <person name="Thome M."/>
            <person name="Hahne M."/>
            <person name="Schneider P."/>
            <person name="Hofmann K."/>
            <person name="Steiner V."/>
            <person name="Bodmer J.-L."/>
            <person name="Schroeter M."/>
            <person name="Burns K."/>
            <person name="Mattmann C."/>
            <person name="Rimoldi D."/>
            <person name="French L.E."/>
            <person name="Tschopp J."/>
        </authorList>
    </citation>
    <scope>NUCLEOTIDE SEQUENCE [MRNA] (ISOFORMS 1 AND 2)</scope>
    <source>
        <tissue>Peripheral blood lymphocyte</tissue>
    </source>
</reference>
<reference key="4">
    <citation type="journal article" date="1997" name="J. Biol. Chem.">
        <title>FLAME-1, a novel FADD-like anti-apoptotic molecule that regulates Fas/TNFR1-induced apoptosis.</title>
        <authorList>
            <person name="Srinivasula S.M."/>
            <person name="Ahmad M."/>
            <person name="Ottilie S."/>
            <person name="Bullrich F."/>
            <person name="Banks S."/>
            <person name="Wang Y."/>
            <person name="Fernandes-Alnemri T."/>
            <person name="Croce C.M."/>
            <person name="Litwack G."/>
            <person name="Tomaselli K.J."/>
            <person name="Armstrong R.C."/>
            <person name="Alnemri E.S."/>
        </authorList>
    </citation>
    <scope>NUCLEOTIDE SEQUENCE [MRNA] (ISOFORMS 1; 8; 9 AND 10)</scope>
    <scope>MUTAGENESIS OF ASP-376</scope>
    <scope>PROTEOLYTIC PROCESSING</scope>
    <scope>SITE</scope>
    <source>
        <tissue>T-cell</tissue>
    </source>
</reference>
<reference key="5">
    <citation type="journal article" date="1997" name="J. Biol. Chem.">
        <title>I-FLICE, a novel inhibitor of tumor necrosis factor receptor-1- and CD-95-induced apoptosis.</title>
        <authorList>
            <person name="Hu S."/>
            <person name="Vincenz C."/>
            <person name="Ni J."/>
            <person name="Gentz R."/>
            <person name="Dixit V.M."/>
        </authorList>
    </citation>
    <scope>NUCLEOTIDE SEQUENCE [MRNA] (ISOFORM 1)</scope>
    <source>
        <tissue>Umbilical vein endothelial cell</tissue>
    </source>
</reference>
<reference key="6">
    <citation type="submission" date="1998-01" db="EMBL/GenBank/DDBJ databases">
        <authorList>
            <person name="Hu S."/>
            <person name="Dixit V.M."/>
        </authorList>
    </citation>
    <scope>NUCLEOTIDE SEQUENCE [MRNA] (ISOFORMS 4; 5; 6 AND 7)</scope>
</reference>
<reference key="7">
    <citation type="journal article" date="1997" name="J. Biol. Chem.">
        <title>CASH, a novel caspase homologue with death effector domains.</title>
        <authorList>
            <person name="Goltsev Y.V."/>
            <person name="Kovalenko A.V."/>
            <person name="Arnold E."/>
            <person name="Varfolomeev E.E."/>
            <person name="Brodianskii V.M."/>
            <person name="Wallach D."/>
        </authorList>
    </citation>
    <scope>NUCLEOTIDE SEQUENCE [MRNA] (ISOFORMS 1 AND 2)</scope>
    <source>
        <tissue>Skin fibroblast</tissue>
    </source>
</reference>
<reference key="8">
    <citation type="journal article" date="1997" name="Proc. Natl. Acad. Sci. U.S.A.">
        <title>CLARP, a death effector domain-containing protein interacts with caspase-8 and regulates apoptosis.</title>
        <authorList>
            <person name="Inohara N."/>
            <person name="Koseki T."/>
            <person name="Hu Y."/>
            <person name="Chen S."/>
            <person name="Nunez G."/>
        </authorList>
    </citation>
    <scope>NUCLEOTIDE SEQUENCE [MRNA] (ISOFORMS 1 AND 2)</scope>
    <source>
        <tissue>Colon carcinoma</tissue>
    </source>
</reference>
<reference key="9">
    <citation type="journal article" date="1998" name="Cell Death Differ.">
        <title>Cell death attenuation by 'Usurpin', a mammalian DED-caspase homologue that precludes caspase-8 recruitment and activation by the CD-95 (Fas, APO-1) receptor complex.</title>
        <authorList>
            <person name="Rasper D.M."/>
            <person name="Vaillancourt J.P."/>
            <person name="Hadano S."/>
            <person name="Houtzager V.M."/>
            <person name="Seiden I."/>
            <person name="Keen S.L.C."/>
            <person name="Tawa P."/>
            <person name="Xanthoudakis S."/>
            <person name="Nasir J."/>
            <person name="Martindale D."/>
            <person name="Koop B.F."/>
            <person name="Peterson E.P."/>
            <person name="Thornberry N.A."/>
            <person name="Huang J."/>
            <person name="MacPherson D.P."/>
            <person name="Black S.C."/>
            <person name="Hornung F."/>
            <person name="Lenardo M.J."/>
            <person name="Hayden M.R."/>
            <person name="Roy S."/>
            <person name="Nicholson D.W."/>
        </authorList>
    </citation>
    <scope>NUCLEOTIDE SEQUENCE [MRNA] (ISOFORMS 1; 11 AND 12)</scope>
    <source>
        <tissue>Kidney</tissue>
    </source>
</reference>
<reference key="10">
    <citation type="journal article" date="2001" name="Genomics">
        <title>Cloning and characterization of three novel genes, ALS2CR1, ALS2CR2, and ALS2CR3, in the juvenile amyotrophic lateral sclerosis (ALS2) critical region at chromosome 2q33-q34: candidate genes for ALS2.</title>
        <authorList>
            <person name="Hadano S."/>
            <person name="Yanagisawa Y."/>
            <person name="Skaug J."/>
            <person name="Fichter K."/>
            <person name="Nasir J."/>
            <person name="Martindale D."/>
            <person name="Koop B.F."/>
            <person name="Scherer S.W."/>
            <person name="Nicholson D.W."/>
            <person name="Rouleau G.A."/>
            <person name="Ikeda J.-E."/>
            <person name="Hayden M.R."/>
        </authorList>
    </citation>
    <scope>NUCLEOTIDE SEQUENCE [GENOMIC DNA]</scope>
</reference>
<reference key="11">
    <citation type="submission" date="2003-05" db="EMBL/GenBank/DDBJ databases">
        <title>Cloning of human full-length CDSs in BD Creator(TM) system donor vector.</title>
        <authorList>
            <person name="Kalnine N."/>
            <person name="Chen X."/>
            <person name="Rolfs A."/>
            <person name="Halleck A."/>
            <person name="Hines L."/>
            <person name="Eisenstein S."/>
            <person name="Koundinya M."/>
            <person name="Raphael J."/>
            <person name="Moreira D."/>
            <person name="Kelley T."/>
            <person name="LaBaer J."/>
            <person name="Lin Y."/>
            <person name="Phelan M."/>
            <person name="Farmer A."/>
        </authorList>
    </citation>
    <scope>NUCLEOTIDE SEQUENCE [LARGE SCALE MRNA] (ISOFORM 1)</scope>
</reference>
<reference key="12">
    <citation type="journal article" date="2004" name="Nat. Genet.">
        <title>Complete sequencing and characterization of 21,243 full-length human cDNAs.</title>
        <authorList>
            <person name="Ota T."/>
            <person name="Suzuki Y."/>
            <person name="Nishikawa T."/>
            <person name="Otsuki T."/>
            <person name="Sugiyama T."/>
            <person name="Irie R."/>
            <person name="Wakamatsu A."/>
            <person name="Hayashi K."/>
            <person name="Sato H."/>
            <person name="Nagai K."/>
            <person name="Kimura K."/>
            <person name="Makita H."/>
            <person name="Sekine M."/>
            <person name="Obayashi M."/>
            <person name="Nishi T."/>
            <person name="Shibahara T."/>
            <person name="Tanaka T."/>
            <person name="Ishii S."/>
            <person name="Yamamoto J."/>
            <person name="Saito K."/>
            <person name="Kawai Y."/>
            <person name="Isono Y."/>
            <person name="Nakamura Y."/>
            <person name="Nagahari K."/>
            <person name="Murakami K."/>
            <person name="Yasuda T."/>
            <person name="Iwayanagi T."/>
            <person name="Wagatsuma M."/>
            <person name="Shiratori A."/>
            <person name="Sudo H."/>
            <person name="Hosoiri T."/>
            <person name="Kaku Y."/>
            <person name="Kodaira H."/>
            <person name="Kondo H."/>
            <person name="Sugawara M."/>
            <person name="Takahashi M."/>
            <person name="Kanda K."/>
            <person name="Yokoi T."/>
            <person name="Furuya T."/>
            <person name="Kikkawa E."/>
            <person name="Omura Y."/>
            <person name="Abe K."/>
            <person name="Kamihara K."/>
            <person name="Katsuta N."/>
            <person name="Sato K."/>
            <person name="Tanikawa M."/>
            <person name="Yamazaki M."/>
            <person name="Ninomiya K."/>
            <person name="Ishibashi T."/>
            <person name="Yamashita H."/>
            <person name="Murakawa K."/>
            <person name="Fujimori K."/>
            <person name="Tanai H."/>
            <person name="Kimata M."/>
            <person name="Watanabe M."/>
            <person name="Hiraoka S."/>
            <person name="Chiba Y."/>
            <person name="Ishida S."/>
            <person name="Ono Y."/>
            <person name="Takiguchi S."/>
            <person name="Watanabe S."/>
            <person name="Yosida M."/>
            <person name="Hotuta T."/>
            <person name="Kusano J."/>
            <person name="Kanehori K."/>
            <person name="Takahashi-Fujii A."/>
            <person name="Hara H."/>
            <person name="Tanase T.-O."/>
            <person name="Nomura Y."/>
            <person name="Togiya S."/>
            <person name="Komai F."/>
            <person name="Hara R."/>
            <person name="Takeuchi K."/>
            <person name="Arita M."/>
            <person name="Imose N."/>
            <person name="Musashino K."/>
            <person name="Yuuki H."/>
            <person name="Oshima A."/>
            <person name="Sasaki N."/>
            <person name="Aotsuka S."/>
            <person name="Yoshikawa Y."/>
            <person name="Matsunawa H."/>
            <person name="Ichihara T."/>
            <person name="Shiohata N."/>
            <person name="Sano S."/>
            <person name="Moriya S."/>
            <person name="Momiyama H."/>
            <person name="Satoh N."/>
            <person name="Takami S."/>
            <person name="Terashima Y."/>
            <person name="Suzuki O."/>
            <person name="Nakagawa S."/>
            <person name="Senoh A."/>
            <person name="Mizoguchi H."/>
            <person name="Goto Y."/>
            <person name="Shimizu F."/>
            <person name="Wakebe H."/>
            <person name="Hishigaki H."/>
            <person name="Watanabe T."/>
            <person name="Sugiyama A."/>
            <person name="Takemoto M."/>
            <person name="Kawakami B."/>
            <person name="Yamazaki M."/>
            <person name="Watanabe K."/>
            <person name="Kumagai A."/>
            <person name="Itakura S."/>
            <person name="Fukuzumi Y."/>
            <person name="Fujimori Y."/>
            <person name="Komiyama M."/>
            <person name="Tashiro H."/>
            <person name="Tanigami A."/>
            <person name="Fujiwara T."/>
            <person name="Ono T."/>
            <person name="Yamada K."/>
            <person name="Fujii Y."/>
            <person name="Ozaki K."/>
            <person name="Hirao M."/>
            <person name="Ohmori Y."/>
            <person name="Kawabata A."/>
            <person name="Hikiji T."/>
            <person name="Kobatake N."/>
            <person name="Inagaki H."/>
            <person name="Ikema Y."/>
            <person name="Okamoto S."/>
            <person name="Okitani R."/>
            <person name="Kawakami T."/>
            <person name="Noguchi S."/>
            <person name="Itoh T."/>
            <person name="Shigeta K."/>
            <person name="Senba T."/>
            <person name="Matsumura K."/>
            <person name="Nakajima Y."/>
            <person name="Mizuno T."/>
            <person name="Morinaga M."/>
            <person name="Sasaki M."/>
            <person name="Togashi T."/>
            <person name="Oyama M."/>
            <person name="Hata H."/>
            <person name="Watanabe M."/>
            <person name="Komatsu T."/>
            <person name="Mizushima-Sugano J."/>
            <person name="Satoh T."/>
            <person name="Shirai Y."/>
            <person name="Takahashi Y."/>
            <person name="Nakagawa K."/>
            <person name="Okumura K."/>
            <person name="Nagase T."/>
            <person name="Nomura N."/>
            <person name="Kikuchi H."/>
            <person name="Masuho Y."/>
            <person name="Yamashita R."/>
            <person name="Nakai K."/>
            <person name="Yada T."/>
            <person name="Nakamura Y."/>
            <person name="Ohara O."/>
            <person name="Isogai T."/>
            <person name="Sugano S."/>
        </authorList>
    </citation>
    <scope>NUCLEOTIDE SEQUENCE [LARGE SCALE MRNA] (ISOFORMS 1; 3 AND 15)</scope>
    <source>
        <tissue>Cerebellum</tissue>
        <tissue>Corpus callosum</tissue>
        <tissue>Subthalamic nucleus</tissue>
    </source>
</reference>
<reference key="13">
    <citation type="journal article" date="2005" name="Nature">
        <title>Generation and annotation of the DNA sequences of human chromosomes 2 and 4.</title>
        <authorList>
            <person name="Hillier L.W."/>
            <person name="Graves T.A."/>
            <person name="Fulton R.S."/>
            <person name="Fulton L.A."/>
            <person name="Pepin K.H."/>
            <person name="Minx P."/>
            <person name="Wagner-McPherson C."/>
            <person name="Layman D."/>
            <person name="Wylie K."/>
            <person name="Sekhon M."/>
            <person name="Becker M.C."/>
            <person name="Fewell G.A."/>
            <person name="Delehaunty K.D."/>
            <person name="Miner T.L."/>
            <person name="Nash W.E."/>
            <person name="Kremitzki C."/>
            <person name="Oddy L."/>
            <person name="Du H."/>
            <person name="Sun H."/>
            <person name="Bradshaw-Cordum H."/>
            <person name="Ali J."/>
            <person name="Carter J."/>
            <person name="Cordes M."/>
            <person name="Harris A."/>
            <person name="Isak A."/>
            <person name="van Brunt A."/>
            <person name="Nguyen C."/>
            <person name="Du F."/>
            <person name="Courtney L."/>
            <person name="Kalicki J."/>
            <person name="Ozersky P."/>
            <person name="Abbott S."/>
            <person name="Armstrong J."/>
            <person name="Belter E.A."/>
            <person name="Caruso L."/>
            <person name="Cedroni M."/>
            <person name="Cotton M."/>
            <person name="Davidson T."/>
            <person name="Desai A."/>
            <person name="Elliott G."/>
            <person name="Erb T."/>
            <person name="Fronick C."/>
            <person name="Gaige T."/>
            <person name="Haakenson W."/>
            <person name="Haglund K."/>
            <person name="Holmes A."/>
            <person name="Harkins R."/>
            <person name="Kim K."/>
            <person name="Kruchowski S.S."/>
            <person name="Strong C.M."/>
            <person name="Grewal N."/>
            <person name="Goyea E."/>
            <person name="Hou S."/>
            <person name="Levy A."/>
            <person name="Martinka S."/>
            <person name="Mead K."/>
            <person name="McLellan M.D."/>
            <person name="Meyer R."/>
            <person name="Randall-Maher J."/>
            <person name="Tomlinson C."/>
            <person name="Dauphin-Kohlberg S."/>
            <person name="Kozlowicz-Reilly A."/>
            <person name="Shah N."/>
            <person name="Swearengen-Shahid S."/>
            <person name="Snider J."/>
            <person name="Strong J.T."/>
            <person name="Thompson J."/>
            <person name="Yoakum M."/>
            <person name="Leonard S."/>
            <person name="Pearman C."/>
            <person name="Trani L."/>
            <person name="Radionenko M."/>
            <person name="Waligorski J.E."/>
            <person name="Wang C."/>
            <person name="Rock S.M."/>
            <person name="Tin-Wollam A.-M."/>
            <person name="Maupin R."/>
            <person name="Latreille P."/>
            <person name="Wendl M.C."/>
            <person name="Yang S.-P."/>
            <person name="Pohl C."/>
            <person name="Wallis J.W."/>
            <person name="Spieth J."/>
            <person name="Bieri T.A."/>
            <person name="Berkowicz N."/>
            <person name="Nelson J.O."/>
            <person name="Osborne J."/>
            <person name="Ding L."/>
            <person name="Meyer R."/>
            <person name="Sabo A."/>
            <person name="Shotland Y."/>
            <person name="Sinha P."/>
            <person name="Wohldmann P.E."/>
            <person name="Cook L.L."/>
            <person name="Hickenbotham M.T."/>
            <person name="Eldred J."/>
            <person name="Williams D."/>
            <person name="Jones T.A."/>
            <person name="She X."/>
            <person name="Ciccarelli F.D."/>
            <person name="Izaurralde E."/>
            <person name="Taylor J."/>
            <person name="Schmutz J."/>
            <person name="Myers R.M."/>
            <person name="Cox D.R."/>
            <person name="Huang X."/>
            <person name="McPherson J.D."/>
            <person name="Mardis E.R."/>
            <person name="Clifton S.W."/>
            <person name="Warren W.C."/>
            <person name="Chinwalla A.T."/>
            <person name="Eddy S.R."/>
            <person name="Marra M.A."/>
            <person name="Ovcharenko I."/>
            <person name="Furey T.S."/>
            <person name="Miller W."/>
            <person name="Eichler E.E."/>
            <person name="Bork P."/>
            <person name="Suyama M."/>
            <person name="Torrents D."/>
            <person name="Waterston R.H."/>
            <person name="Wilson R.K."/>
        </authorList>
    </citation>
    <scope>NUCLEOTIDE SEQUENCE [LARGE SCALE GENOMIC DNA]</scope>
</reference>
<reference key="14">
    <citation type="submission" date="2005-07" db="EMBL/GenBank/DDBJ databases">
        <authorList>
            <person name="Mural R.J."/>
            <person name="Istrail S."/>
            <person name="Sutton G.G."/>
            <person name="Florea L."/>
            <person name="Halpern A.L."/>
            <person name="Mobarry C.M."/>
            <person name="Lippert R."/>
            <person name="Walenz B."/>
            <person name="Shatkay H."/>
            <person name="Dew I."/>
            <person name="Miller J.R."/>
            <person name="Flanigan M.J."/>
            <person name="Edwards N.J."/>
            <person name="Bolanos R."/>
            <person name="Fasulo D."/>
            <person name="Halldorsson B.V."/>
            <person name="Hannenhalli S."/>
            <person name="Turner R."/>
            <person name="Yooseph S."/>
            <person name="Lu F."/>
            <person name="Nusskern D.R."/>
            <person name="Shue B.C."/>
            <person name="Zheng X.H."/>
            <person name="Zhong F."/>
            <person name="Delcher A.L."/>
            <person name="Huson D.H."/>
            <person name="Kravitz S.A."/>
            <person name="Mouchard L."/>
            <person name="Reinert K."/>
            <person name="Remington K.A."/>
            <person name="Clark A.G."/>
            <person name="Waterman M.S."/>
            <person name="Eichler E.E."/>
            <person name="Adams M.D."/>
            <person name="Hunkapiller M.W."/>
            <person name="Myers E.W."/>
            <person name="Venter J.C."/>
        </authorList>
    </citation>
    <scope>NUCLEOTIDE SEQUENCE [LARGE SCALE GENOMIC DNA]</scope>
</reference>
<reference key="15">
    <citation type="journal article" date="2004" name="Genome Res.">
        <title>The status, quality, and expansion of the NIH full-length cDNA project: the Mammalian Gene Collection (MGC).</title>
        <authorList>
            <consortium name="The MGC Project Team"/>
        </authorList>
    </citation>
    <scope>NUCLEOTIDE SEQUENCE [LARGE SCALE MRNA] (ISOFORM 1)</scope>
    <source>
        <tissue>Lymph</tissue>
    </source>
</reference>
<reference key="16">
    <citation type="journal article" date="1999" name="J. Biol. Chem.">
        <title>The role of c-FLIP in modulation of CD95-induced apoptosis.</title>
        <authorList>
            <person name="Scaffidi C."/>
            <person name="Schmitz I."/>
            <person name="Krammer P.H."/>
            <person name="Peter M.E."/>
        </authorList>
    </citation>
    <scope>FUNCTION</scope>
    <scope>ASSOCIATION WITH DISC</scope>
</reference>
<reference key="17">
    <citation type="journal article" date="1999" name="J. Immunol.">
        <title>Cell cycle-dependent regulation of FLIP levels and susceptibility to Fas-mediated apoptosis.</title>
        <authorList>
            <person name="Algeciras-Schimnich A."/>
            <person name="Griffith T.S."/>
            <person name="Lynch D.H."/>
            <person name="Paya C.V."/>
        </authorList>
    </citation>
    <scope>INDUCTION</scope>
</reference>
<reference key="18">
    <citation type="journal article" date="2003" name="EMBO J.">
        <title>Pro-apoptotic function of HBV X protein is mediated by interaction with c-FLIP and enhancement of death-inducing signal.</title>
        <authorList>
            <person name="Kim K.H."/>
            <person name="Seong B.L."/>
        </authorList>
    </citation>
    <scope>INTERACTION WITH HBV PROTEIN X (MICROBIAL INFECTION)</scope>
</reference>
<reference key="19">
    <citation type="journal article" date="2004" name="Genome Biol.">
        <title>An unappreciated role for RNA surveillance.</title>
        <authorList>
            <person name="Hillman R.T."/>
            <person name="Green R.E."/>
            <person name="Brenner S.E."/>
        </authorList>
    </citation>
    <scope>SPLICE ISOFORM(S) THAT ARE POTENTIAL NMD TARGET(S)</scope>
</reference>
<accession>O15519</accession>
<accession>B4DJE0</accession>
<accession>B7Z9F9</accession>
<accession>O14673</accession>
<accession>O14674</accession>
<accession>O14675</accession>
<accession>O15137</accession>
<accession>O15138</accession>
<accession>O15356</accession>
<accession>O15510</accession>
<accession>O43618</accession>
<accession>O43619</accession>
<accession>O43620</accession>
<accession>O60458</accession>
<accession>O60459</accession>
<accession>Q53TS6</accession>
<accession>Q54AF1</accession>
<accession>Q96TE4</accession>
<accession>Q9UEW1</accession>
<comment type="function">
    <text evidence="8">Apoptosis regulator protein which may function as a crucial link between cell survival and cell death pathways in mammalian cells. Acts as an inhibitor of TNFRSF6 mediated apoptosis. A proteolytic fragment (p43) is likely retained in the death-inducing signaling complex (DISC) thereby blocking further recruitment and processing of caspase-8 at the complex. Full length and shorter isoforms have been shown either to induce apoptosis or to reduce TNFRSF-triggered apoptosis. Lacks enzymatic (caspase) activity.</text>
</comment>
<comment type="subunit">
    <text evidence="1 5 7 8">TNFRSF6 stimulation triggers recruitment to the death-inducing signaling complex (DISC) formed by TNFRSF6, FADD and CASP8 (PubMed:9880531). A proteolytic fragment (p43) stays associated with the DISC (PubMed:9880531). Also interacts with FADD, CASP8, CASP3, TRAF1, TRAF2 and Bcl-X(L) (in vitro) (PubMed:9208847, PubMed:9326610). Interacts with RIPK1 (By similarity) (PubMed:9208847, PubMed:9326610, PubMed:9880531).</text>
</comment>
<comment type="subunit">
    <text evidence="4">(Microbial infection) Interacts with HBV protein X.</text>
</comment>
<comment type="interaction">
    <interactant intactId="EBI-514941">
        <id>O15519</id>
    </interactant>
    <interactant intactId="EBI-495095">
        <id>Q92851</id>
        <label>CASP10</label>
    </interactant>
    <organismsDiffer>false</organismsDiffer>
    <experiments>3</experiments>
</comment>
<comment type="interaction">
    <interactant intactId="EBI-514941">
        <id>O15519</id>
    </interactant>
    <interactant intactId="EBI-78060">
        <id>Q14790</id>
        <label>CASP8</label>
    </interactant>
    <organismsDiffer>false</organismsDiffer>
    <experiments>10</experiments>
</comment>
<comment type="interaction">
    <interactant intactId="EBI-514941">
        <id>O15519</id>
    </interactant>
    <interactant intactId="EBI-359224">
        <id>Q13077</id>
        <label>TRAF1</label>
    </interactant>
    <organismsDiffer>false</organismsDiffer>
    <experiments>6</experiments>
</comment>
<comment type="interaction">
    <interactant intactId="EBI-4567563">
        <id>O15519-1</id>
    </interactant>
    <interactant intactId="EBI-78060">
        <id>Q14790</id>
        <label>CASP8</label>
    </interactant>
    <organismsDiffer>false</organismsDiffer>
    <experiments>2</experiments>
</comment>
<comment type="interaction">
    <interactant intactId="EBI-4567563">
        <id>O15519-1</id>
    </interactant>
    <interactant intactId="EBI-15777741">
        <id>Q14790-2</id>
        <label>CASP8</label>
    </interactant>
    <organismsDiffer>false</organismsDiffer>
    <experiments>3</experiments>
</comment>
<comment type="interaction">
    <interactant intactId="EBI-4567563">
        <id>O15519-1</id>
    </interactant>
    <interactant intactId="EBI-492564">
        <id>Q02750</id>
        <label>MAP2K1</label>
    </interactant>
    <organismsDiffer>false</organismsDiffer>
    <experiments>3</experiments>
</comment>
<comment type="interaction">
    <interactant intactId="EBI-4567563">
        <id>O15519-1</id>
    </interactant>
    <interactant intactId="EBI-492605">
        <id>O14733</id>
        <label>MAP2K7</label>
    </interactant>
    <organismsDiffer>false</organismsDiffer>
    <experiments>2</experiments>
</comment>
<comment type="interaction">
    <interactant intactId="EBI-4478097">
        <id>PRO_0000004678</id>
    </interactant>
    <interactant intactId="EBI-6621134">
        <id>Q92851-4</id>
        <label>CASP10</label>
    </interactant>
    <organismsDiffer>false</organismsDiffer>
    <experiments>3</experiments>
</comment>
<comment type="alternative products">
    <event type="alternative splicing"/>
    <isoform>
        <id>O15519-1</id>
        <name>1</name>
        <name>FLIP-L</name>
        <name>CLARP1</name>
        <name>MRIT alpha-1</name>
        <name>CASH alpha</name>
        <name>I-FLICE 1</name>
        <name>FLAME-1 gamma</name>
        <name>Usurpin alpha</name>
        <sequence type="displayed"/>
    </isoform>
    <isoform>
        <id>O15519-2</id>
        <name>2</name>
        <name>FLIP-S</name>
        <name>CLARP2</name>
        <name>MRIT beta-1</name>
        <name>CASH beta</name>
        <sequence type="described" ref="VSP_000828 VSP_000829"/>
    </isoform>
    <isoform>
        <id>O15519-3</id>
        <name>3</name>
        <name>MRIT alpha-2</name>
        <sequence type="described" ref="VSP_000824 VSP_000838"/>
    </isoform>
    <isoform>
        <id>O15519-4</id>
        <name>4</name>
        <name>I-FLICE 2</name>
        <sequence type="described" ref="VSP_000825"/>
    </isoform>
    <isoform>
        <id>O15519-5</id>
        <name>5</name>
        <name>I-FLICE 3</name>
        <sequence type="described" ref="VSP_000840"/>
    </isoform>
    <isoform>
        <id>O15519-6</id>
        <name>6</name>
        <name>I-FLICE 4</name>
        <sequence type="described" ref="VSP_000826 VSP_000841"/>
    </isoform>
    <isoform>
        <id>O15519-7</id>
        <name>7</name>
        <name>I-FLICE 5</name>
        <sequence type="described" ref="VSP_000824 VSP_000827 VSP_000838"/>
    </isoform>
    <isoform>
        <id>O15519-8</id>
        <name>8</name>
        <name>FLAME-1 alpha</name>
        <sequence type="described" ref="VSP_000830"/>
    </isoform>
    <isoform>
        <id>O15519-9</id>
        <name>9</name>
        <name>FLAME-1 beta</name>
        <sequence type="described" ref="VSP_000830 VSP_000836 VSP_000837"/>
    </isoform>
    <isoform>
        <id>O15519-10</id>
        <name>10</name>
        <name>FLAME-1 delta</name>
        <sequence type="described" ref="VSP_000834 VSP_000835"/>
    </isoform>
    <isoform>
        <id>O15519-11</id>
        <name>11</name>
        <name>Usurpin beta</name>
        <sequence type="described" ref="VSP_000838"/>
    </isoform>
    <isoform>
        <id>O15519-12</id>
        <name>12</name>
        <name>Usurpin gamma</name>
        <sequence type="described" ref="VSP_000832 VSP_000833"/>
    </isoform>
    <isoform>
        <id>O15519-13</id>
        <name>13</name>
        <sequence type="described" ref="VSP_000831"/>
    </isoform>
    <isoform>
        <id>O15519-14</id>
        <name>14</name>
        <sequence type="described" ref="VSP_000839"/>
    </isoform>
    <isoform>
        <id>O15519-15</id>
        <name>15</name>
        <sequence type="described" ref="VSP_000824"/>
    </isoform>
</comment>
<comment type="tissue specificity">
    <text>Widely expressed. Higher expression in skeletal muscle, pancreas, heart, kidney, placenta, and peripheral blood leukocytes. Also detected in diverse cell lines. Isoform 8 is predominantly expressed in testis and skeletal muscle.</text>
</comment>
<comment type="induction">
    <text evidence="3">Repressed by IL2/interleukin-2 after TCR stimulation, during progression to the S phase of the cell cycle.</text>
</comment>
<comment type="domain">
    <text>The caspase domain lacks the active site residues involved in catalysis.</text>
</comment>
<comment type="PTM">
    <text evidence="6">Proteolytically processed by CASP8 generating subunit p43 and p12.</text>
</comment>
<comment type="miscellaneous">
    <molecule>Isoform 9</molecule>
    <text evidence="18">May be produced at very low levels due to a premature stop codon in the mRNA, leading to nonsense-mediated mRNA decay.</text>
</comment>
<comment type="similarity">
    <text evidence="18">Belongs to the peptidase C14A family.</text>
</comment>
<comment type="online information" name="Atlas of Genetics and Cytogenetics in Oncology and Haematology">
    <link uri="https://atlasgeneticsoncology.org/gene/40065/CFLAR"/>
</comment>
<feature type="chain" id="PRO_0000004678" description="CASP8 and FADD-like apoptosis regulator subunit p43">
    <location>
        <begin position="1"/>
        <end position="376"/>
    </location>
</feature>
<feature type="chain" id="PRO_0000004679" description="CASP8 and FADD-like apoptosis regulator subunit p12" evidence="6">
    <location>
        <begin position="377"/>
        <end position="480"/>
    </location>
</feature>
<feature type="domain" description="DED 1" evidence="2">
    <location>
        <begin position="1"/>
        <end position="73"/>
    </location>
</feature>
<feature type="domain" description="DED 2" evidence="2">
    <location>
        <begin position="92"/>
        <end position="170"/>
    </location>
</feature>
<feature type="region of interest" description="Not proteolytically processed and involved in apoptosis inhibition">
    <location>
        <begin position="1"/>
        <end position="435"/>
    </location>
</feature>
<feature type="region of interest" description="Interaction with CASP8 propeptide" evidence="5 7">
    <location>
        <begin position="1"/>
        <end position="305"/>
    </location>
</feature>
<feature type="region of interest" description="Interaction with FADD" evidence="5 7">
    <location>
        <begin position="1"/>
        <end position="227"/>
    </location>
</feature>
<feature type="region of interest" description="Interaction with CASP8" evidence="5 7">
    <location>
        <begin position="1"/>
        <end position="195"/>
    </location>
</feature>
<feature type="region of interest" description="Interaction with TRAF1 and TRAF2" evidence="5">
    <location>
        <begin position="192"/>
        <end position="480"/>
    </location>
</feature>
<feature type="region of interest" description="Interaction with CASP3" evidence="5 7">
    <location>
        <begin position="192"/>
        <end position="435"/>
    </location>
</feature>
<feature type="region of interest" description="Interaction with CASP8 subunits p18 and p10" evidence="5 7">
    <location>
        <begin position="217"/>
        <end position="480"/>
    </location>
</feature>
<feature type="region of interest" description="Caspase">
    <location>
        <begin position="263"/>
        <end position="358"/>
    </location>
</feature>
<feature type="region of interest" description="Interaction with CASP8" evidence="5 7">
    <location>
        <begin position="370"/>
        <end position="480"/>
    </location>
</feature>
<feature type="site" description="Cleavage; by CASP8" evidence="1">
    <location>
        <begin position="369"/>
        <end position="370"/>
    </location>
</feature>
<feature type="site" description="Cleavage; by CASP8" evidence="6">
    <location>
        <begin position="376"/>
        <end position="377"/>
    </location>
</feature>
<feature type="splice variant" id="VSP_000825" description="In isoform 4." evidence="17">
    <location>
        <begin position="1"/>
        <end position="245"/>
    </location>
</feature>
<feature type="splice variant" id="VSP_000824" description="In isoform 3, isoform 7 and isoform 15." evidence="10 15 17">
    <location>
        <begin position="1"/>
        <end position="96"/>
    </location>
</feature>
<feature type="splice variant" id="VSP_000826" description="In isoform 6." evidence="17">
    <original>SAEVIHQVEEALDTDEKEMLLFLCRDVAI</original>
    <variation>LERPPVCSKV</variation>
    <location>
        <begin position="2"/>
        <end position="30"/>
    </location>
</feature>
<feature type="splice variant" id="VSP_000831" description="In isoform 13." evidence="11">
    <location>
        <begin position="203"/>
        <end position="480"/>
    </location>
</feature>
<feature type="splice variant" id="VSP_000830" description="In isoform 8 and isoform 9." evidence="13">
    <location>
        <begin position="203"/>
        <end position="237"/>
    </location>
</feature>
<feature type="splice variant" id="VSP_000828" description="In isoform 2." evidence="12 14 15 16">
    <original>LHNGRSKEQRLKEQLGAQQ</original>
    <variation>MITPYAHCPDLKILGNCSM</variation>
    <location>
        <begin position="203"/>
        <end position="221"/>
    </location>
</feature>
<feature type="splice variant" id="VSP_000827" description="In isoform 7." evidence="17">
    <original>LHNGRSKEQRLKEQLGAQQ</original>
    <variation>E</variation>
    <location>
        <begin position="203"/>
        <end position="221"/>
    </location>
</feature>
<feature type="splice variant" id="VSP_000829" description="In isoform 2." evidence="12 14 15 16">
    <location>
        <begin position="222"/>
        <end position="480"/>
    </location>
</feature>
<feature type="splice variant" id="VSP_000832" description="In isoform 12." evidence="9">
    <original>ELLRDTFTSLGYEVQKFLHLSMHGISQI</original>
    <variation>GWSAMAQSQLTAISTSQVQAILLPQPPE</variation>
    <location>
        <begin position="265"/>
        <end position="292"/>
    </location>
</feature>
<feature type="splice variant" id="VSP_000834" description="In isoform 10." evidence="13">
    <original>LLRDTFTSLGYEVQKFLHLSMHGISQILGQFACMP</original>
    <variation>NAHSWIFTLNSMATCMIGTAEFLPRRNIMFGCSTL</variation>
    <location>
        <begin position="266"/>
        <end position="300"/>
    </location>
</feature>
<feature type="splice variant" id="VSP_000836" description="In isoform 9." evidence="13">
    <original>LRDTFTSLGYEVQKFLHLSMHGISQILGQFACMPEHRDY</original>
    <variation>CGVRGPAGGQQPLGGGWASDEECGIQGSEARAVHSSPRS</variation>
    <location>
        <begin position="267"/>
        <end position="305"/>
    </location>
</feature>
<feature type="splice variant" id="VSP_000833" description="In isoform 12." evidence="9">
    <location>
        <begin position="293"/>
        <end position="480"/>
    </location>
</feature>
<feature type="splice variant" id="VSP_000835" description="In isoform 10." evidence="13">
    <location>
        <begin position="301"/>
        <end position="480"/>
    </location>
</feature>
<feature type="splice variant" id="VSP_000837" description="In isoform 9." evidence="13">
    <location>
        <begin position="306"/>
        <end position="480"/>
    </location>
</feature>
<feature type="splice variant" id="VSP_000838" description="In isoform 11, isoform 7 and isoform 3." evidence="9 10 15 17">
    <original>KRPLLDLHIELNGYMYDWNSRVSAKEKYYVWLQHTLRKKLILSYT</original>
    <variation>GTIPGSGITESKDMHFSSLGCILLDVL</variation>
    <location>
        <begin position="436"/>
        <end position="480"/>
    </location>
</feature>
<feature type="splice variant" id="VSP_000839" description="In isoform 14." evidence="11">
    <location>
        <begin position="436"/>
        <end position="480"/>
    </location>
</feature>
<feature type="splice variant" id="VSP_000840" description="In isoform 5." evidence="17">
    <original>YMYDWNSRVSAKEKYYVWLQHTLRKKLILSYT</original>
    <variation>L</variation>
    <location>
        <begin position="449"/>
        <end position="480"/>
    </location>
</feature>
<feature type="splice variant" id="VSP_000841" description="In isoform 6." evidence="17">
    <original>WNSRVSAKEKYYVWLQHTLRKKLILSYT</original>
    <variation>SLEHTGGRY</variation>
    <location>
        <begin position="453"/>
        <end position="480"/>
    </location>
</feature>
<feature type="sequence variant" id="VAR_048619" description="In dbSNP:rs13424615.">
    <original>L</original>
    <variation>I</variation>
    <location>
        <position position="203"/>
    </location>
</feature>
<feature type="mutagenesis site" description="Decreases apoptosis-inducing activity. Reduces interaction with caspase-3 and proteolytic processing." evidence="5">
    <original>Y</original>
    <variation>F</variation>
    <location>
        <position position="360"/>
    </location>
</feature>
<feature type="mutagenesis site" description="Abolishes proteolytic processing." evidence="6">
    <original>D</original>
    <variation>N</variation>
    <variation>A</variation>
    <location>
        <position position="376"/>
    </location>
</feature>
<feature type="sequence conflict" description="In Ref. 8; AAC15825/AAC15826." evidence="18" ref="8">
    <original>SFL</original>
    <variation>ISW</variation>
    <location>
        <begin position="130"/>
        <end position="132"/>
    </location>
</feature>
<feature type="sequence conflict" description="In Ref. 8; AAC15825." evidence="18" ref="8">
    <original>D</original>
    <variation>E</variation>
    <location>
        <position position="343"/>
    </location>
</feature>
<feature type="sequence conflict" description="In Ref. 6; AAB99794." evidence="18" ref="6">
    <original>E</original>
    <variation>D</variation>
    <location>
        <position position="364"/>
    </location>
</feature>
<feature type="sequence conflict" description="In Ref. 8; AAC15825." evidence="18" ref="8">
    <original>QLE</original>
    <variation>PAG</variation>
    <location>
        <begin position="366"/>
        <end position="368"/>
    </location>
</feature>
<feature type="sequence conflict" description="In Ref. 7; CAA74366." evidence="18" ref="7">
    <original>D</original>
    <variation>N</variation>
    <location>
        <position position="369"/>
    </location>
</feature>
<feature type="sequence conflict" description="In Ref. 6; AAB99793." evidence="18" ref="6">
    <original>L</original>
    <variation>F</variation>
    <location>
        <position position="372"/>
    </location>
</feature>
<feature type="sequence conflict" description="In Ref. 8; AAC15825." evidence="18" ref="8">
    <original>LE</original>
    <variation>WR</variation>
    <location>
        <begin position="373"/>
        <end position="374"/>
    </location>
</feature>
<feature type="helix" evidence="20">
    <location>
        <begin position="3"/>
        <end position="12"/>
    </location>
</feature>
<feature type="helix" evidence="20">
    <location>
        <begin position="15"/>
        <end position="24"/>
    </location>
</feature>
<feature type="turn" evidence="20">
    <location>
        <begin position="25"/>
        <end position="28"/>
    </location>
</feature>
<feature type="helix" evidence="20">
    <location>
        <begin position="37"/>
        <end position="46"/>
    </location>
</feature>
<feature type="helix" evidence="20">
    <location>
        <begin position="52"/>
        <end position="61"/>
    </location>
</feature>
<feature type="helix" evidence="20">
    <location>
        <begin position="65"/>
        <end position="70"/>
    </location>
</feature>
<feature type="helix" evidence="20">
    <location>
        <begin position="76"/>
        <end position="85"/>
    </location>
</feature>
<feature type="helix" evidence="20">
    <location>
        <begin position="92"/>
        <end position="102"/>
    </location>
</feature>
<feature type="helix" evidence="20">
    <location>
        <begin position="106"/>
        <end position="116"/>
    </location>
</feature>
<feature type="helix" evidence="20">
    <location>
        <begin position="117"/>
        <end position="119"/>
    </location>
</feature>
<feature type="helix" evidence="20">
    <location>
        <begin position="131"/>
        <end position="140"/>
    </location>
</feature>
<feature type="helix" evidence="20">
    <location>
        <begin position="150"/>
        <end position="158"/>
    </location>
</feature>
<feature type="helix" evidence="20">
    <location>
        <begin position="162"/>
        <end position="175"/>
    </location>
</feature>
<feature type="strand" evidence="19">
    <location>
        <begin position="239"/>
        <end position="241"/>
    </location>
</feature>
<feature type="strand" evidence="19">
    <location>
        <begin position="249"/>
        <end position="260"/>
    </location>
</feature>
<feature type="helix" evidence="19">
    <location>
        <begin position="266"/>
        <end position="274"/>
    </location>
</feature>
<feature type="strand" evidence="19">
    <location>
        <begin position="276"/>
        <end position="283"/>
    </location>
</feature>
<feature type="helix" evidence="19">
    <location>
        <begin position="286"/>
        <end position="297"/>
    </location>
</feature>
<feature type="helix" evidence="19">
    <location>
        <begin position="300"/>
        <end position="304"/>
    </location>
</feature>
<feature type="strand" evidence="19">
    <location>
        <begin position="306"/>
        <end position="317"/>
    </location>
</feature>
<feature type="helix" evidence="19">
    <location>
        <begin position="333"/>
        <end position="340"/>
    </location>
</feature>
<feature type="turn" evidence="19">
    <location>
        <begin position="342"/>
        <end position="344"/>
    </location>
</feature>
<feature type="helix" evidence="19">
    <location>
        <begin position="346"/>
        <end position="348"/>
    </location>
</feature>
<feature type="strand" evidence="19">
    <location>
        <begin position="353"/>
        <end position="361"/>
    </location>
</feature>
<feature type="strand" evidence="19">
    <location>
        <begin position="400"/>
        <end position="409"/>
    </location>
</feature>
<feature type="helix" evidence="19">
    <location>
        <begin position="410"/>
        <end position="412"/>
    </location>
</feature>
<feature type="helix" evidence="19">
    <location>
        <begin position="422"/>
        <end position="433"/>
    </location>
</feature>
<feature type="helix" evidence="19">
    <location>
        <begin position="439"/>
        <end position="454"/>
    </location>
</feature>
<feature type="helix" evidence="19">
    <location>
        <begin position="459"/>
        <end position="461"/>
    </location>
</feature>
<feature type="strand" evidence="19">
    <location>
        <begin position="463"/>
        <end position="469"/>
    </location>
</feature>
<proteinExistence type="evidence at protein level"/>
<name>CFLAR_HUMAN</name>
<protein>
    <recommendedName>
        <fullName>CASP8 and FADD-like apoptosis regulator</fullName>
    </recommendedName>
    <alternativeName>
        <fullName>Caspase homolog</fullName>
        <shortName>CASH</shortName>
    </alternativeName>
    <alternativeName>
        <fullName>Caspase-eight-related protein</fullName>
        <shortName>Casper</shortName>
    </alternativeName>
    <alternativeName>
        <fullName>Caspase-like apoptosis regulatory protein</fullName>
        <shortName>CLARP</shortName>
    </alternativeName>
    <alternativeName>
        <fullName>Cellular FLICE-like inhibitory protein</fullName>
        <shortName>c-FLIP</shortName>
    </alternativeName>
    <alternativeName>
        <fullName>FADD-like antiapoptotic molecule 1</fullName>
        <shortName>FLAME-1</shortName>
    </alternativeName>
    <alternativeName>
        <fullName>Inhibitor of FLICE</fullName>
        <shortName>I-FLICE</shortName>
    </alternativeName>
    <alternativeName>
        <fullName>MACH-related inducer of toxicity</fullName>
        <shortName>MRIT</shortName>
    </alternativeName>
    <alternativeName>
        <fullName>Usurpin</fullName>
    </alternativeName>
    <component>
        <recommendedName>
            <fullName>CASP8 and FADD-like apoptosis regulator subunit p43</fullName>
        </recommendedName>
    </component>
    <component>
        <recommendedName>
            <fullName>CASP8 and FADD-like apoptosis regulator subunit p12</fullName>
        </recommendedName>
    </component>
</protein>
<evidence type="ECO:0000250" key="1">
    <source>
        <dbReference type="UniProtKB" id="O35732"/>
    </source>
</evidence>
<evidence type="ECO:0000255" key="2">
    <source>
        <dbReference type="PROSITE-ProRule" id="PRU00065"/>
    </source>
</evidence>
<evidence type="ECO:0000269" key="3">
    <source>
    </source>
</evidence>
<evidence type="ECO:0000269" key="4">
    <source>
    </source>
</evidence>
<evidence type="ECO:0000269" key="5">
    <source>
    </source>
</evidence>
<evidence type="ECO:0000269" key="6">
    <source>
    </source>
</evidence>
<evidence type="ECO:0000269" key="7">
    <source>
    </source>
</evidence>
<evidence type="ECO:0000269" key="8">
    <source>
    </source>
</evidence>
<evidence type="ECO:0000303" key="9">
    <source>
    </source>
</evidence>
<evidence type="ECO:0000303" key="10">
    <source>
    </source>
</evidence>
<evidence type="ECO:0000303" key="11">
    <source>
    </source>
</evidence>
<evidence type="ECO:0000303" key="12">
    <source>
    </source>
</evidence>
<evidence type="ECO:0000303" key="13">
    <source>
    </source>
</evidence>
<evidence type="ECO:0000303" key="14">
    <source>
    </source>
</evidence>
<evidence type="ECO:0000303" key="15">
    <source>
    </source>
</evidence>
<evidence type="ECO:0000303" key="16">
    <source>
    </source>
</evidence>
<evidence type="ECO:0000303" key="17">
    <source ref="6"/>
</evidence>
<evidence type="ECO:0000305" key="18"/>
<evidence type="ECO:0007829" key="19">
    <source>
        <dbReference type="PDB" id="3H11"/>
    </source>
</evidence>
<evidence type="ECO:0007829" key="20">
    <source>
        <dbReference type="PDB" id="8YD7"/>
    </source>
</evidence>
<gene>
    <name type="primary">CFLAR</name>
    <name type="synonym">CASH</name>
    <name type="synonym">CASP8AP1</name>
    <name type="synonym">CLARP</name>
    <name type="synonym">MRIT</name>
</gene>
<sequence>MSAEVIHQVEEALDTDEKEMLLFLCRDVAIDVVPPNVRDLLDILRERGKLSVGDLAELLYRVRRFDLLKRILKMDRKAVETHLLRNPHLVSDYRVLMAEIGEDLDKSDVSSLIFLMKDYMGRGKISKEKSFLDLVVELEKLNLVAPDQLDLLEKCLKNIHRIDLKTKIQKYKQSVQGAGTSYRNVLQAAIQKSLKDPSNNFRLHNGRSKEQRLKEQLGAQQEPVKKSIQESEAFLPQSIPEERYKMKSKPLGICLIIDCIGNETELLRDTFTSLGYEVQKFLHLSMHGISQILGQFACMPEHRDYDSFVCVLVSRGGSQSVYGVDQTHSGLPLHHIRRMFMGDSCPYLAGKPKMFFIQNYVVSEGQLEDSSLLEVDGPAMKNVEFKAQKRGLCTVHREADFFWSLCTADMSLLEQSHSSPSLYLQCLSQKLRQERKRPLLDLHIELNGYMYDWNSRVSAKEKYYVWLQHTLRKKLILSYT</sequence>
<keyword id="KW-0002">3D-structure</keyword>
<keyword id="KW-0025">Alternative splicing</keyword>
<keyword id="KW-0053">Apoptosis</keyword>
<keyword id="KW-0945">Host-virus interaction</keyword>
<keyword id="KW-1267">Proteomics identification</keyword>
<keyword id="KW-1185">Reference proteome</keyword>
<keyword id="KW-0677">Repeat</keyword>